<dbReference type="EMBL" id="CP000380">
    <property type="protein sequence ID" value="ABF81033.1"/>
    <property type="molecule type" value="Genomic_DNA"/>
</dbReference>
<dbReference type="HOGENOM" id="CLU_089554_2_0_4"/>
<dbReference type="GO" id="GO:0005886">
    <property type="term" value="C:plasma membrane"/>
    <property type="evidence" value="ECO:0007669"/>
    <property type="project" value="UniProtKB-SubCell"/>
</dbReference>
<dbReference type="HAMAP" id="MF_00189">
    <property type="entry name" value="YciB"/>
    <property type="match status" value="1"/>
</dbReference>
<dbReference type="InterPro" id="IPR006008">
    <property type="entry name" value="YciB"/>
</dbReference>
<dbReference type="NCBIfam" id="TIGR00997">
    <property type="entry name" value="ispZ"/>
    <property type="match status" value="1"/>
</dbReference>
<dbReference type="NCBIfam" id="NF001325">
    <property type="entry name" value="PRK00259.1-3"/>
    <property type="match status" value="1"/>
</dbReference>
<dbReference type="PANTHER" id="PTHR36917:SF1">
    <property type="entry name" value="INNER MEMBRANE-SPANNING PROTEIN YCIB"/>
    <property type="match status" value="1"/>
</dbReference>
<dbReference type="PANTHER" id="PTHR36917">
    <property type="entry name" value="INTRACELLULAR SEPTATION PROTEIN A-RELATED"/>
    <property type="match status" value="1"/>
</dbReference>
<dbReference type="Pfam" id="PF04279">
    <property type="entry name" value="IspA"/>
    <property type="match status" value="1"/>
</dbReference>
<organism>
    <name type="scientific">Burkholderia orbicola (strain AU 1054)</name>
    <dbReference type="NCBI Taxonomy" id="331271"/>
    <lineage>
        <taxon>Bacteria</taxon>
        <taxon>Pseudomonadati</taxon>
        <taxon>Pseudomonadota</taxon>
        <taxon>Betaproteobacteria</taxon>
        <taxon>Burkholderiales</taxon>
        <taxon>Burkholderiaceae</taxon>
        <taxon>Burkholderia</taxon>
        <taxon>Burkholderia cepacia complex</taxon>
        <taxon>Burkholderia orbicola</taxon>
    </lineage>
</organism>
<keyword id="KW-0997">Cell inner membrane</keyword>
<keyword id="KW-1003">Cell membrane</keyword>
<keyword id="KW-0472">Membrane</keyword>
<keyword id="KW-0812">Transmembrane</keyword>
<keyword id="KW-1133">Transmembrane helix</keyword>
<protein>
    <recommendedName>
        <fullName evidence="1">Inner membrane-spanning protein YciB</fullName>
    </recommendedName>
</protein>
<name>YCIB_BURO1</name>
<proteinExistence type="inferred from homology"/>
<evidence type="ECO:0000255" key="1">
    <source>
        <dbReference type="HAMAP-Rule" id="MF_00189"/>
    </source>
</evidence>
<sequence length="176" mass="20112">MKFLFDLFPIILFFVAFKVWGIFTATAVAIVATLAQVAWVAFRHRKVDTMLWVSLGVIVVFGGATLVLHDEKFIQWKPTVLYWLFAIGLLAARYAFGKNLIEKMMGKQLTLPVPVWDKLNVAWALFFAVLGVANLYVVHNFTESQWVNFKLFGTTGAMVVFIILQSLWLTKYLKDE</sequence>
<accession>Q1BH72</accession>
<reference key="1">
    <citation type="submission" date="2006-05" db="EMBL/GenBank/DDBJ databases">
        <title>Complete sequence of chromosome 3 of Burkholderia cenocepacia AU 1054.</title>
        <authorList>
            <consortium name="US DOE Joint Genome Institute"/>
            <person name="Copeland A."/>
            <person name="Lucas S."/>
            <person name="Lapidus A."/>
            <person name="Barry K."/>
            <person name="Detter J.C."/>
            <person name="Glavina del Rio T."/>
            <person name="Hammon N."/>
            <person name="Israni S."/>
            <person name="Dalin E."/>
            <person name="Tice H."/>
            <person name="Pitluck S."/>
            <person name="Chain P."/>
            <person name="Malfatti S."/>
            <person name="Shin M."/>
            <person name="Vergez L."/>
            <person name="Schmutz J."/>
            <person name="Larimer F."/>
            <person name="Land M."/>
            <person name="Hauser L."/>
            <person name="Kyrpides N."/>
            <person name="Lykidis A."/>
            <person name="LiPuma J.J."/>
            <person name="Konstantinidis K."/>
            <person name="Tiedje J.M."/>
            <person name="Richardson P."/>
        </authorList>
    </citation>
    <scope>NUCLEOTIDE SEQUENCE [LARGE SCALE GENOMIC DNA]</scope>
    <source>
        <strain>AU 1054</strain>
    </source>
</reference>
<comment type="function">
    <text evidence="1">Plays a role in cell envelope biogenesis, maintenance of cell envelope integrity and membrane homeostasis.</text>
</comment>
<comment type="subcellular location">
    <subcellularLocation>
        <location evidence="1">Cell inner membrane</location>
        <topology evidence="1">Multi-pass membrane protein</topology>
    </subcellularLocation>
</comment>
<comment type="similarity">
    <text evidence="1">Belongs to the YciB family.</text>
</comment>
<feature type="chain" id="PRO_1000020989" description="Inner membrane-spanning protein YciB">
    <location>
        <begin position="1"/>
        <end position="176"/>
    </location>
</feature>
<feature type="transmembrane region" description="Helical" evidence="1">
    <location>
        <begin position="3"/>
        <end position="23"/>
    </location>
</feature>
<feature type="transmembrane region" description="Helical" evidence="1">
    <location>
        <begin position="24"/>
        <end position="44"/>
    </location>
</feature>
<feature type="transmembrane region" description="Helical" evidence="1">
    <location>
        <begin position="49"/>
        <end position="69"/>
    </location>
</feature>
<feature type="transmembrane region" description="Helical" evidence="1">
    <location>
        <begin position="72"/>
        <end position="92"/>
    </location>
</feature>
<feature type="transmembrane region" description="Helical" evidence="1">
    <location>
        <begin position="121"/>
        <end position="141"/>
    </location>
</feature>
<feature type="transmembrane region" description="Helical" evidence="1">
    <location>
        <begin position="149"/>
        <end position="169"/>
    </location>
</feature>
<gene>
    <name evidence="1" type="primary">yciB</name>
    <name type="ordered locus">Bcen_6169</name>
</gene>